<name>RL35_BURCJ</name>
<keyword id="KW-0687">Ribonucleoprotein</keyword>
<keyword id="KW-0689">Ribosomal protein</keyword>
<reference key="1">
    <citation type="journal article" date="2009" name="J. Bacteriol.">
        <title>The genome of Burkholderia cenocepacia J2315, an epidemic pathogen of cystic fibrosis patients.</title>
        <authorList>
            <person name="Holden M.T."/>
            <person name="Seth-Smith H.M."/>
            <person name="Crossman L.C."/>
            <person name="Sebaihia M."/>
            <person name="Bentley S.D."/>
            <person name="Cerdeno-Tarraga A.M."/>
            <person name="Thomson N.R."/>
            <person name="Bason N."/>
            <person name="Quail M.A."/>
            <person name="Sharp S."/>
            <person name="Cherevach I."/>
            <person name="Churcher C."/>
            <person name="Goodhead I."/>
            <person name="Hauser H."/>
            <person name="Holroyd N."/>
            <person name="Mungall K."/>
            <person name="Scott P."/>
            <person name="Walker D."/>
            <person name="White B."/>
            <person name="Rose H."/>
            <person name="Iversen P."/>
            <person name="Mil-Homens D."/>
            <person name="Rocha E.P."/>
            <person name="Fialho A.M."/>
            <person name="Baldwin A."/>
            <person name="Dowson C."/>
            <person name="Barrell B.G."/>
            <person name="Govan J.R."/>
            <person name="Vandamme P."/>
            <person name="Hart C.A."/>
            <person name="Mahenthiralingam E."/>
            <person name="Parkhill J."/>
        </authorList>
    </citation>
    <scope>NUCLEOTIDE SEQUENCE [LARGE SCALE GENOMIC DNA]</scope>
    <source>
        <strain>ATCC BAA-245 / DSM 16553 / LMG 16656 / NCTC 13227 / J2315 / CF5610</strain>
    </source>
</reference>
<comment type="similarity">
    <text evidence="1">Belongs to the bacterial ribosomal protein bL35 family.</text>
</comment>
<feature type="chain" id="PRO_1000127319" description="Large ribosomal subunit protein bL35">
    <location>
        <begin position="1"/>
        <end position="65"/>
    </location>
</feature>
<protein>
    <recommendedName>
        <fullName evidence="1">Large ribosomal subunit protein bL35</fullName>
    </recommendedName>
    <alternativeName>
        <fullName evidence="2">50S ribosomal protein L35</fullName>
    </alternativeName>
</protein>
<sequence length="65" mass="7301">MPKMKTKKSAAKRFVVRPGGTVKRGQAFKRHILTKKTTKNKRHLRGATAVHDSDLNSVRAMLPFA</sequence>
<gene>
    <name evidence="1" type="primary">rpmI</name>
    <name type="ordered locus">BceJ2315_14490</name>
    <name type="ORF">BCAL1483</name>
</gene>
<accession>B4E7I7</accession>
<evidence type="ECO:0000255" key="1">
    <source>
        <dbReference type="HAMAP-Rule" id="MF_00514"/>
    </source>
</evidence>
<evidence type="ECO:0000305" key="2"/>
<dbReference type="EMBL" id="AM747720">
    <property type="protein sequence ID" value="CAR51782.1"/>
    <property type="molecule type" value="Genomic_DNA"/>
</dbReference>
<dbReference type="RefSeq" id="WP_004191477.1">
    <property type="nucleotide sequence ID" value="NC_011000.1"/>
</dbReference>
<dbReference type="SMR" id="B4E7I7"/>
<dbReference type="GeneID" id="98102115"/>
<dbReference type="KEGG" id="bcj:BCAL1483"/>
<dbReference type="eggNOG" id="COG0291">
    <property type="taxonomic scope" value="Bacteria"/>
</dbReference>
<dbReference type="HOGENOM" id="CLU_169643_1_0_4"/>
<dbReference type="BioCyc" id="BCEN216591:G1G1V-1650-MONOMER"/>
<dbReference type="Proteomes" id="UP000001035">
    <property type="component" value="Chromosome 1"/>
</dbReference>
<dbReference type="GO" id="GO:0022625">
    <property type="term" value="C:cytosolic large ribosomal subunit"/>
    <property type="evidence" value="ECO:0007669"/>
    <property type="project" value="TreeGrafter"/>
</dbReference>
<dbReference type="GO" id="GO:0003735">
    <property type="term" value="F:structural constituent of ribosome"/>
    <property type="evidence" value="ECO:0007669"/>
    <property type="project" value="InterPro"/>
</dbReference>
<dbReference type="GO" id="GO:0006412">
    <property type="term" value="P:translation"/>
    <property type="evidence" value="ECO:0007669"/>
    <property type="project" value="UniProtKB-UniRule"/>
</dbReference>
<dbReference type="FunFam" id="4.10.410.60:FF:000001">
    <property type="entry name" value="50S ribosomal protein L35"/>
    <property type="match status" value="1"/>
</dbReference>
<dbReference type="Gene3D" id="4.10.410.60">
    <property type="match status" value="1"/>
</dbReference>
<dbReference type="HAMAP" id="MF_00514">
    <property type="entry name" value="Ribosomal_bL35"/>
    <property type="match status" value="1"/>
</dbReference>
<dbReference type="InterPro" id="IPR001706">
    <property type="entry name" value="Ribosomal_bL35"/>
</dbReference>
<dbReference type="InterPro" id="IPR021137">
    <property type="entry name" value="Ribosomal_bL35-like"/>
</dbReference>
<dbReference type="InterPro" id="IPR018265">
    <property type="entry name" value="Ribosomal_bL35_CS"/>
</dbReference>
<dbReference type="InterPro" id="IPR037229">
    <property type="entry name" value="Ribosomal_bL35_sf"/>
</dbReference>
<dbReference type="NCBIfam" id="TIGR00001">
    <property type="entry name" value="rpmI_bact"/>
    <property type="match status" value="1"/>
</dbReference>
<dbReference type="PANTHER" id="PTHR33343">
    <property type="entry name" value="54S RIBOSOMAL PROTEIN BL35M"/>
    <property type="match status" value="1"/>
</dbReference>
<dbReference type="PANTHER" id="PTHR33343:SF1">
    <property type="entry name" value="LARGE RIBOSOMAL SUBUNIT PROTEIN BL35M"/>
    <property type="match status" value="1"/>
</dbReference>
<dbReference type="Pfam" id="PF01632">
    <property type="entry name" value="Ribosomal_L35p"/>
    <property type="match status" value="1"/>
</dbReference>
<dbReference type="PRINTS" id="PR00064">
    <property type="entry name" value="RIBOSOMALL35"/>
</dbReference>
<dbReference type="SUPFAM" id="SSF143034">
    <property type="entry name" value="L35p-like"/>
    <property type="match status" value="1"/>
</dbReference>
<dbReference type="PROSITE" id="PS00936">
    <property type="entry name" value="RIBOSOMAL_L35"/>
    <property type="match status" value="1"/>
</dbReference>
<proteinExistence type="inferred from homology"/>
<organism>
    <name type="scientific">Burkholderia cenocepacia (strain ATCC BAA-245 / DSM 16553 / LMG 16656 / NCTC 13227 / J2315 / CF5610)</name>
    <name type="common">Burkholderia cepacia (strain J2315)</name>
    <dbReference type="NCBI Taxonomy" id="216591"/>
    <lineage>
        <taxon>Bacteria</taxon>
        <taxon>Pseudomonadati</taxon>
        <taxon>Pseudomonadota</taxon>
        <taxon>Betaproteobacteria</taxon>
        <taxon>Burkholderiales</taxon>
        <taxon>Burkholderiaceae</taxon>
        <taxon>Burkholderia</taxon>
        <taxon>Burkholderia cepacia complex</taxon>
    </lineage>
</organism>